<proteinExistence type="evidence at protein level"/>
<feature type="chain" id="PRO_0000377749" description="Short neurotoxin E1" evidence="4">
    <location>
        <begin position="1"/>
        <end position="21" status="greater than"/>
    </location>
</feature>
<feature type="region of interest" description="Disordered" evidence="3">
    <location>
        <begin position="1"/>
        <end position="21"/>
    </location>
</feature>
<feature type="non-terminal residue">
    <location>
        <position position="21"/>
    </location>
</feature>
<evidence type="ECO:0000250" key="1">
    <source>
        <dbReference type="UniProtKB" id="F5CPD8"/>
    </source>
</evidence>
<evidence type="ECO:0000250" key="2">
    <source>
        <dbReference type="UniProtKB" id="P60775"/>
    </source>
</evidence>
<evidence type="ECO:0000256" key="3">
    <source>
        <dbReference type="SAM" id="MobiDB-lite"/>
    </source>
</evidence>
<evidence type="ECO:0000269" key="4">
    <source>
    </source>
</evidence>
<evidence type="ECO:0000305" key="5"/>
<name>3S1E1_MICPY</name>
<comment type="function">
    <text evidence="2">Binds to muscle nicotinic acetylcholine receptor (nAChR) and inhibit acetylcholine from binding to the receptor, thereby impairing neuromuscular transmission.</text>
</comment>
<comment type="subcellular location">
    <subcellularLocation>
        <location evidence="4">Secreted</location>
    </subcellularLocation>
</comment>
<comment type="tissue specificity">
    <text evidence="5">Expressed by the venom gland.</text>
</comment>
<comment type="PTM">
    <text evidence="1">Contains 4 disulfide bonds.</text>
</comment>
<comment type="mass spectrometry"/>
<comment type="similarity">
    <text evidence="5">Belongs to the three-finger toxin family. Short-chain subfamily. Type I alpha-neurotoxin sub-subfamily.</text>
</comment>
<organism>
    <name type="scientific">Micrurus pyrrhocryptus</name>
    <name type="common">Coral snake</name>
    <dbReference type="NCBI Taxonomy" id="129468"/>
    <lineage>
        <taxon>Eukaryota</taxon>
        <taxon>Metazoa</taxon>
        <taxon>Chordata</taxon>
        <taxon>Craniata</taxon>
        <taxon>Vertebrata</taxon>
        <taxon>Euteleostomi</taxon>
        <taxon>Lepidosauria</taxon>
        <taxon>Squamata</taxon>
        <taxon>Bifurcata</taxon>
        <taxon>Unidentata</taxon>
        <taxon>Episquamata</taxon>
        <taxon>Toxicofera</taxon>
        <taxon>Serpentes</taxon>
        <taxon>Colubroidea</taxon>
        <taxon>Elapidae</taxon>
        <taxon>Elapinae</taxon>
        <taxon>Micrurus</taxon>
    </lineage>
</organism>
<protein>
    <recommendedName>
        <fullName>Short neurotoxin E1</fullName>
    </recommendedName>
</protein>
<accession>P0CAR3</accession>
<keyword id="KW-0008">Acetylcholine receptor inhibiting toxin</keyword>
<keyword id="KW-0903">Direct protein sequencing</keyword>
<keyword id="KW-1015">Disulfide bond</keyword>
<keyword id="KW-0872">Ion channel impairing toxin</keyword>
<keyword id="KW-0528">Neurotoxin</keyword>
<keyword id="KW-0629">Postsynaptic neurotoxin</keyword>
<keyword id="KW-0964">Secreted</keyword>
<keyword id="KW-0800">Toxin</keyword>
<reference key="1">
    <citation type="journal article" date="2009" name="Toxicon">
        <title>Biochemical characterization of the Micrurus pyrrhocryptus venom.</title>
        <authorList>
            <person name="Dokmetjian J.C."/>
            <person name="Del Canto S."/>
            <person name="Vinzon S."/>
            <person name="de Jimenez Bonino M.B."/>
        </authorList>
    </citation>
    <scope>PROTEIN SEQUENCE</scope>
    <scope>MASS SPECTROMETRY</scope>
    <scope>SUBCELLULAR LOCATION</scope>
    <source>
        <tissue>Venom</tissue>
    </source>
</reference>
<sequence>MICYNHQSSEPPTTXTCSEGQ</sequence>
<dbReference type="GO" id="GO:0005576">
    <property type="term" value="C:extracellular region"/>
    <property type="evidence" value="ECO:0007669"/>
    <property type="project" value="UniProtKB-SubCell"/>
</dbReference>
<dbReference type="GO" id="GO:0030550">
    <property type="term" value="F:acetylcholine receptor inhibitor activity"/>
    <property type="evidence" value="ECO:0007669"/>
    <property type="project" value="UniProtKB-KW"/>
</dbReference>
<dbReference type="GO" id="GO:0099106">
    <property type="term" value="F:ion channel regulator activity"/>
    <property type="evidence" value="ECO:0007669"/>
    <property type="project" value="UniProtKB-KW"/>
</dbReference>
<dbReference type="GO" id="GO:0090729">
    <property type="term" value="F:toxin activity"/>
    <property type="evidence" value="ECO:0007669"/>
    <property type="project" value="UniProtKB-KW"/>
</dbReference>